<gene>
    <name type="primary">ecpB</name>
    <name type="synonym">matC</name>
    <name type="ordered locus">EC55989_0296</name>
</gene>
<comment type="function">
    <text evidence="1">Part of the ecpRABCDE operon, which encodes the E.coli common pilus (ECP). ECP is found in both commensal and pathogenic strains and plays a dual role in early-stage biofilm development and host cell recognition (By similarity).</text>
</comment>
<comment type="induction">
    <text evidence="1">Negatively regulated by H-NS. Positively regulated by IHF and EcpR (By similarity).</text>
</comment>
<comment type="similarity">
    <text evidence="3">Belongs to the EcpB/EcpE family.</text>
</comment>
<reference key="1">
    <citation type="journal article" date="2009" name="PLoS Genet.">
        <title>Organised genome dynamics in the Escherichia coli species results in highly diverse adaptive paths.</title>
        <authorList>
            <person name="Touchon M."/>
            <person name="Hoede C."/>
            <person name="Tenaillon O."/>
            <person name="Barbe V."/>
            <person name="Baeriswyl S."/>
            <person name="Bidet P."/>
            <person name="Bingen E."/>
            <person name="Bonacorsi S."/>
            <person name="Bouchier C."/>
            <person name="Bouvet O."/>
            <person name="Calteau A."/>
            <person name="Chiapello H."/>
            <person name="Clermont O."/>
            <person name="Cruveiller S."/>
            <person name="Danchin A."/>
            <person name="Diard M."/>
            <person name="Dossat C."/>
            <person name="Karoui M.E."/>
            <person name="Frapy E."/>
            <person name="Garry L."/>
            <person name="Ghigo J.M."/>
            <person name="Gilles A.M."/>
            <person name="Johnson J."/>
            <person name="Le Bouguenec C."/>
            <person name="Lescat M."/>
            <person name="Mangenot S."/>
            <person name="Martinez-Jehanne V."/>
            <person name="Matic I."/>
            <person name="Nassif X."/>
            <person name="Oztas S."/>
            <person name="Petit M.A."/>
            <person name="Pichon C."/>
            <person name="Rouy Z."/>
            <person name="Ruf C.S."/>
            <person name="Schneider D."/>
            <person name="Tourret J."/>
            <person name="Vacherie B."/>
            <person name="Vallenet D."/>
            <person name="Medigue C."/>
            <person name="Rocha E.P.C."/>
            <person name="Denamur E."/>
        </authorList>
    </citation>
    <scope>NUCLEOTIDE SEQUENCE [LARGE SCALE GENOMIC DNA]</scope>
    <source>
        <strain>55989 / EAEC</strain>
    </source>
</reference>
<dbReference type="EMBL" id="CU928145">
    <property type="protein sequence ID" value="CAU96174.1"/>
    <property type="molecule type" value="Genomic_DNA"/>
</dbReference>
<dbReference type="RefSeq" id="WP_000716398.1">
    <property type="nucleotide sequence ID" value="NC_011748.1"/>
</dbReference>
<dbReference type="SMR" id="B7L423"/>
<dbReference type="GeneID" id="75204621"/>
<dbReference type="KEGG" id="eck:EC55989_0296"/>
<dbReference type="HOGENOM" id="CLU_106652_0_0_6"/>
<dbReference type="Proteomes" id="UP000000746">
    <property type="component" value="Chromosome"/>
</dbReference>
<dbReference type="Gene3D" id="2.60.40.10">
    <property type="entry name" value="Immunoglobulins"/>
    <property type="match status" value="1"/>
</dbReference>
<dbReference type="InterPro" id="IPR040695">
    <property type="entry name" value="EcpB_C"/>
</dbReference>
<dbReference type="InterPro" id="IPR013783">
    <property type="entry name" value="Ig-like_fold"/>
</dbReference>
<dbReference type="InterPro" id="IPR008962">
    <property type="entry name" value="PapD-like_sf"/>
</dbReference>
<dbReference type="Pfam" id="PF18649">
    <property type="entry name" value="EcpB_C"/>
    <property type="match status" value="1"/>
</dbReference>
<dbReference type="SUPFAM" id="SSF49354">
    <property type="entry name" value="PapD-like"/>
    <property type="match status" value="1"/>
</dbReference>
<evidence type="ECO:0000250" key="1"/>
<evidence type="ECO:0000255" key="2"/>
<evidence type="ECO:0000305" key="3"/>
<feature type="signal peptide" evidence="2">
    <location>
        <begin position="1"/>
        <end position="20"/>
    </location>
</feature>
<feature type="chain" id="PRO_0000369155" description="Probable fimbrial chaperone EcpB">
    <location>
        <begin position="21"/>
        <end position="222"/>
    </location>
</feature>
<sequence length="222" mass="24517">MKKHLLPLALLFSGISPAQALDVGDISSFMNSDSSTLSKTIKNSTDSGRLINIRLERLSSPLDDGQVISMDKPDELLLTPASLLLPAQASEVIRFFYKGPADEKERYYRIVWFDQALSDAQRDNANRSAVATASARIGTILVVAPRQANYHFQYANGSLTNTGNATLRILAYGPCLKAANGKECKENYYLMPGKSRRFTRVDTADNKGRVALWQGDKFIPVK</sequence>
<organism>
    <name type="scientific">Escherichia coli (strain 55989 / EAEC)</name>
    <dbReference type="NCBI Taxonomy" id="585055"/>
    <lineage>
        <taxon>Bacteria</taxon>
        <taxon>Pseudomonadati</taxon>
        <taxon>Pseudomonadota</taxon>
        <taxon>Gammaproteobacteria</taxon>
        <taxon>Enterobacterales</taxon>
        <taxon>Enterobacteriaceae</taxon>
        <taxon>Escherichia</taxon>
    </lineage>
</organism>
<name>ECPB_ECO55</name>
<keyword id="KW-0143">Chaperone</keyword>
<keyword id="KW-1029">Fimbrium biogenesis</keyword>
<keyword id="KW-1185">Reference proteome</keyword>
<keyword id="KW-0732">Signal</keyword>
<protein>
    <recommendedName>
        <fullName>Probable fimbrial chaperone EcpB</fullName>
    </recommendedName>
</protein>
<accession>B7L423</accession>
<proteinExistence type="inferred from homology"/>